<name>ATR2_STEAL</name>
<keyword id="KW-0349">Heme</keyword>
<keyword id="KW-0408">Iron</keyword>
<keyword id="KW-0472">Membrane</keyword>
<keyword id="KW-0479">Metal-binding</keyword>
<keyword id="KW-0503">Monooxygenase</keyword>
<keyword id="KW-0560">Oxidoreductase</keyword>
<keyword id="KW-0812">Transmembrane</keyword>
<keyword id="KW-1133">Transmembrane helix</keyword>
<organism>
    <name type="scientific">Stereocaulon alpinum</name>
    <name type="common">Alpine snow lichen</name>
    <name type="synonym">Stereocaulon paschale var. alpinum</name>
    <dbReference type="NCBI Taxonomy" id="350623"/>
    <lineage>
        <taxon>Eukaryota</taxon>
        <taxon>Fungi</taxon>
        <taxon>Dikarya</taxon>
        <taxon>Ascomycota</taxon>
        <taxon>Pezizomycotina</taxon>
        <taxon>Lecanoromycetes</taxon>
        <taxon>OSLEUM clade</taxon>
        <taxon>Lecanoromycetidae</taxon>
        <taxon>Lecanorales</taxon>
        <taxon>Lecanorineae</taxon>
        <taxon>Stereocaulaceae</taxon>
        <taxon>Stereocaulon</taxon>
    </lineage>
</organism>
<comment type="function">
    <text evidence="3">Cytochrome P450 monooxygenase; part of the gene cluster that mediates the biosynthesis of atranorin, a depside of polyketide origin that accumulates in the cortical or medullary layers of lichen thalli (PubMed:34154413). Atr2 performs the oxidation at the C-9 position of 4-O-demethylbarbatic acid to yield proatranorin III via proatranorin II (PubMed:34154413). Atr2 is also able to oxidize the atr3 product proatranorin I to produce the final compound atranorin (PubMed:34154413). The first step in the pathway is performed by the non-reducing polyketide synthase atr1 that produces 4-O-demethylbarbatic acid composed of two 3-methylorsellinic acid (3MOA) moieties. The pathway continues with the actions of the cytochrome P450 monooygenase atr2 that catalizes the oxidation of c-9 and the O-methyltransferase atr3 that performs the methylation of the carboxyl group to yield atranorin, via the proatranorin II and III intermediates if atr2 acts first, or the proatranorin I intermediate if atr3 acts first (PubMed:34154413).</text>
</comment>
<comment type="catalytic activity">
    <reaction evidence="3">
        <text>4-O-demethylbarbatate + reduced [NADPH--hemoprotein reductase] + O2 = proatranorin II + oxidized [NADPH--hemoprotein reductase] + H2O + H(+)</text>
        <dbReference type="Rhea" id="RHEA:72919"/>
        <dbReference type="Rhea" id="RHEA-COMP:11964"/>
        <dbReference type="Rhea" id="RHEA-COMP:11965"/>
        <dbReference type="ChEBI" id="CHEBI:15377"/>
        <dbReference type="ChEBI" id="CHEBI:15378"/>
        <dbReference type="ChEBI" id="CHEBI:15379"/>
        <dbReference type="ChEBI" id="CHEBI:57618"/>
        <dbReference type="ChEBI" id="CHEBI:58210"/>
        <dbReference type="ChEBI" id="CHEBI:192547"/>
        <dbReference type="ChEBI" id="CHEBI:192549"/>
    </reaction>
    <physiologicalReaction direction="left-to-right" evidence="3">
        <dbReference type="Rhea" id="RHEA:72920"/>
    </physiologicalReaction>
</comment>
<comment type="catalytic activity">
    <reaction evidence="3">
        <text>proatranorin II + reduced [NADPH--hemoprotein reductase] + O2 = proatranorin III + oxidized [NADPH--hemoprotein reductase] + 2 H2O + H(+)</text>
        <dbReference type="Rhea" id="RHEA:72923"/>
        <dbReference type="Rhea" id="RHEA-COMP:11964"/>
        <dbReference type="Rhea" id="RHEA-COMP:11965"/>
        <dbReference type="ChEBI" id="CHEBI:15377"/>
        <dbReference type="ChEBI" id="CHEBI:15378"/>
        <dbReference type="ChEBI" id="CHEBI:15379"/>
        <dbReference type="ChEBI" id="CHEBI:57618"/>
        <dbReference type="ChEBI" id="CHEBI:58210"/>
        <dbReference type="ChEBI" id="CHEBI:192549"/>
        <dbReference type="ChEBI" id="CHEBI:192550"/>
    </reaction>
    <physiologicalReaction direction="left-to-right" evidence="3">
        <dbReference type="Rhea" id="RHEA:72924"/>
    </physiologicalReaction>
</comment>
<comment type="catalytic activity">
    <reaction evidence="3">
        <text>proatranorin I + reduced [NADPH--hemoprotein reductase] + O2 = proatranorin IV + oxidized [NADPH--hemoprotein reductase] + H2O + H(+)</text>
        <dbReference type="Rhea" id="RHEA:72927"/>
        <dbReference type="Rhea" id="RHEA-COMP:11964"/>
        <dbReference type="Rhea" id="RHEA-COMP:11965"/>
        <dbReference type="ChEBI" id="CHEBI:15377"/>
        <dbReference type="ChEBI" id="CHEBI:15378"/>
        <dbReference type="ChEBI" id="CHEBI:15379"/>
        <dbReference type="ChEBI" id="CHEBI:57618"/>
        <dbReference type="ChEBI" id="CHEBI:58210"/>
        <dbReference type="ChEBI" id="CHEBI:192548"/>
        <dbReference type="ChEBI" id="CHEBI:192556"/>
    </reaction>
    <physiologicalReaction direction="left-to-right" evidence="3">
        <dbReference type="Rhea" id="RHEA:72928"/>
    </physiologicalReaction>
</comment>
<comment type="catalytic activity">
    <reaction evidence="3">
        <text>proatranorin IV + reduced [NADPH--hemoprotein reductase] + O2 = atranorin + oxidized [NADPH--hemoprotein reductase] + 2 H2O + H(+)</text>
        <dbReference type="Rhea" id="RHEA:72931"/>
        <dbReference type="Rhea" id="RHEA-COMP:11964"/>
        <dbReference type="Rhea" id="RHEA-COMP:11965"/>
        <dbReference type="ChEBI" id="CHEBI:15377"/>
        <dbReference type="ChEBI" id="CHEBI:15378"/>
        <dbReference type="ChEBI" id="CHEBI:15379"/>
        <dbReference type="ChEBI" id="CHEBI:57618"/>
        <dbReference type="ChEBI" id="CHEBI:58210"/>
        <dbReference type="ChEBI" id="CHEBI:144119"/>
        <dbReference type="ChEBI" id="CHEBI:192556"/>
    </reaction>
    <physiologicalReaction direction="left-to-right" evidence="3">
        <dbReference type="Rhea" id="RHEA:72932"/>
    </physiologicalReaction>
</comment>
<comment type="cofactor">
    <cofactor evidence="1">
        <name>heme</name>
        <dbReference type="ChEBI" id="CHEBI:30413"/>
    </cofactor>
</comment>
<comment type="pathway">
    <text evidence="3">Secondary metabolite biosynthesis; terpenoid biosynthesis.</text>
</comment>
<comment type="subcellular location">
    <subcellularLocation>
        <location evidence="2">Membrane</location>
        <topology evidence="2">Single-pass membrane protein</topology>
    </subcellularLocation>
</comment>
<comment type="similarity">
    <text evidence="5">Belongs to the cytochrome P450 family.</text>
</comment>
<proteinExistence type="evidence at protein level"/>
<gene>
    <name evidence="4" type="primary">atr2</name>
</gene>
<dbReference type="EC" id="1.-.-.-" evidence="3"/>
<dbReference type="EMBL" id="MZ277878">
    <property type="protein sequence ID" value="QXF68952.1"/>
    <property type="molecule type" value="Genomic_DNA"/>
</dbReference>
<dbReference type="SMR" id="A0A8F4SN83"/>
<dbReference type="UniPathway" id="UPA00213"/>
<dbReference type="GO" id="GO:0016020">
    <property type="term" value="C:membrane"/>
    <property type="evidence" value="ECO:0007669"/>
    <property type="project" value="UniProtKB-SubCell"/>
</dbReference>
<dbReference type="GO" id="GO:0020037">
    <property type="term" value="F:heme binding"/>
    <property type="evidence" value="ECO:0007669"/>
    <property type="project" value="InterPro"/>
</dbReference>
<dbReference type="GO" id="GO:0005506">
    <property type="term" value="F:iron ion binding"/>
    <property type="evidence" value="ECO:0007669"/>
    <property type="project" value="InterPro"/>
</dbReference>
<dbReference type="GO" id="GO:0004497">
    <property type="term" value="F:monooxygenase activity"/>
    <property type="evidence" value="ECO:0007669"/>
    <property type="project" value="UniProtKB-KW"/>
</dbReference>
<dbReference type="GO" id="GO:0016705">
    <property type="term" value="F:oxidoreductase activity, acting on paired donors, with incorporation or reduction of molecular oxygen"/>
    <property type="evidence" value="ECO:0007669"/>
    <property type="project" value="InterPro"/>
</dbReference>
<dbReference type="GO" id="GO:0016114">
    <property type="term" value="P:terpenoid biosynthetic process"/>
    <property type="evidence" value="ECO:0007669"/>
    <property type="project" value="UniProtKB-UniPathway"/>
</dbReference>
<dbReference type="CDD" id="cd11058">
    <property type="entry name" value="CYP60B-like"/>
    <property type="match status" value="1"/>
</dbReference>
<dbReference type="FunFam" id="1.10.630.10:FF:000047">
    <property type="entry name" value="Cytochrome P450 monooxygenase"/>
    <property type="match status" value="1"/>
</dbReference>
<dbReference type="Gene3D" id="1.10.630.10">
    <property type="entry name" value="Cytochrome P450"/>
    <property type="match status" value="1"/>
</dbReference>
<dbReference type="InterPro" id="IPR001128">
    <property type="entry name" value="Cyt_P450"/>
</dbReference>
<dbReference type="InterPro" id="IPR017972">
    <property type="entry name" value="Cyt_P450_CS"/>
</dbReference>
<dbReference type="InterPro" id="IPR002401">
    <property type="entry name" value="Cyt_P450_E_grp-I"/>
</dbReference>
<dbReference type="InterPro" id="IPR036396">
    <property type="entry name" value="Cyt_P450_sf"/>
</dbReference>
<dbReference type="InterPro" id="IPR050121">
    <property type="entry name" value="Cytochrome_P450_monoxygenase"/>
</dbReference>
<dbReference type="PANTHER" id="PTHR24305">
    <property type="entry name" value="CYTOCHROME P450"/>
    <property type="match status" value="1"/>
</dbReference>
<dbReference type="PANTHER" id="PTHR24305:SF210">
    <property type="entry name" value="CYTOCHROME P450 MONOOXYGENASE ASQL-RELATED"/>
    <property type="match status" value="1"/>
</dbReference>
<dbReference type="Pfam" id="PF00067">
    <property type="entry name" value="p450"/>
    <property type="match status" value="1"/>
</dbReference>
<dbReference type="PRINTS" id="PR00463">
    <property type="entry name" value="EP450I"/>
</dbReference>
<dbReference type="PRINTS" id="PR00385">
    <property type="entry name" value="P450"/>
</dbReference>
<dbReference type="SUPFAM" id="SSF48264">
    <property type="entry name" value="Cytochrome P450"/>
    <property type="match status" value="1"/>
</dbReference>
<dbReference type="PROSITE" id="PS00086">
    <property type="entry name" value="CYTOCHROME_P450"/>
    <property type="match status" value="1"/>
</dbReference>
<feature type="chain" id="PRO_0000455742" description="Cytochrome P450 monooxygenase atr2">
    <location>
        <begin position="1"/>
        <end position="506"/>
    </location>
</feature>
<feature type="transmembrane region" description="Helical" evidence="2">
    <location>
        <begin position="18"/>
        <end position="38"/>
    </location>
</feature>
<feature type="binding site" description="axial binding residue" evidence="1">
    <location>
        <position position="451"/>
    </location>
    <ligand>
        <name>heme</name>
        <dbReference type="ChEBI" id="CHEBI:30413"/>
    </ligand>
    <ligandPart>
        <name>Fe</name>
        <dbReference type="ChEBI" id="CHEBI:18248"/>
    </ligandPart>
</feature>
<sequence length="506" mass="57240">MALLDTIELFSNFSLSGVFAGLVLASLLTTTYCIWNIFYNIYLHPLKGYPGPKFLTTSRLPYLKWMFSGTLVPNFQRLHEQYGPVVRVAPNELSYINPEALKTIYGHRQPGEGFRKNPAFFQPATNGVHSILTSEGDAHSSVRRKILPAFSDKALAEQQDILQHFTDLLIRKLRERVEASKSSEPVDMFEWYIWTTFDLIGDLAFGEPFNCLEAASFTEWVALVFNAFKTFAFINISKQLAPLDKLVRLMIPKSMKARQDKVFSLNVAKVDRRIASKADRPDFLSYIIKGKDGVAMALPELYANSTLLVLAGSESTASGLAGITFELLKHREAQKKAVEEIRSAFKTEDEIVPESVKRLPYLAAMVSEGLRMYPPFPEGLPRLTPRQGAQICGQWVPGGTYVQFSTHAAHRASANFTDPNVFAPERWLGDTKFASDIKEASQPFSIGPRSCIGRNLAYLEMRLILARMLWSFDMQLTPECEDWDDQNSWIQWDKKPLMVKLSLVKR</sequence>
<accession>A0A8F4SN83</accession>
<protein>
    <recommendedName>
        <fullName evidence="4">Cytochrome P450 monooxygenase atr2</fullName>
        <ecNumber evidence="3">1.-.-.-</ecNumber>
    </recommendedName>
    <alternativeName>
        <fullName evidence="4">Atranorin biosynthesis cluster protein 2</fullName>
    </alternativeName>
</protein>
<evidence type="ECO:0000250" key="1">
    <source>
        <dbReference type="UniProtKB" id="P04798"/>
    </source>
</evidence>
<evidence type="ECO:0000255" key="2"/>
<evidence type="ECO:0000269" key="3">
    <source>
    </source>
</evidence>
<evidence type="ECO:0000303" key="4">
    <source>
    </source>
</evidence>
<evidence type="ECO:0000305" key="5"/>
<reference key="1">
    <citation type="journal article" date="2021" name="MBio">
        <title>Linking a gene cluster to atranorin, a major cortical substance of lichens, through genetic dereplication and heterologous expression.</title>
        <authorList>
            <person name="Kim W."/>
            <person name="Liu R."/>
            <person name="Woo S."/>
            <person name="Kang K.B."/>
            <person name="Park H."/>
            <person name="Yu Y.H."/>
            <person name="Ha H.H."/>
            <person name="Oh S.Y."/>
            <person name="Yang J.H."/>
            <person name="Kim H."/>
            <person name="Yun S.H."/>
            <person name="Hur J.S."/>
        </authorList>
    </citation>
    <scope>NUCLEOTIDE SEQUENCE [GENOMIC DNA]</scope>
    <scope>FUNCTION</scope>
    <scope>CATALYTIC ACTIVITY</scope>
    <scope>PATHWAY</scope>
</reference>